<gene>
    <name type="ordered locus">MA_1418</name>
</gene>
<sequence>MIELRNFSYTYGTAAIPALKNINLEIRKGELLLVTGHSAAGKTTLALAMAGILHHEIGGKIEGNISFQSRDVKEFDGIKELSRHIGVVFDDAESQLIFTTVEEEIFSGLENRGHPEKEMVRRSKEAMDFCAISHLNNRAPHMLSGGQKQKVALAATLALDTEVLILDEATAELDSQAVRKVFSVLKRLKDAGKTIIIIDHNIEDFLEIGDRVVLLEKGEIKAIKSPSEFTSKSSDLTSTNLTSTSALQTDLPLSRTAEQPIISVKNLTQRYGEILALDNIDLEIYPGELVAILGENGSGKTTLVKHFNGLLRPYSGKVTVKGLETSTTPINELVKHTGLVFQNPDNMLFEDTVEAEINFGLNNIGVKGPEAVGAILRSLELVNLNDKQKVFPRHLSRGERQRLAVACIIAMKPELIVLDEPTTGLDAEESDRMMQLMRKLQQEGHTIVMVTHNLQIVRDHVERVIRMESGKVVEDSANRKFSGKGSVKEESDYKGHVSKEIVSEEIVSEEIVSEESVSEECVRGGTCA</sequence>
<feature type="chain" id="PRO_0000092137" description="Putative ABC transporter ATP-binding protein MA_1418">
    <location>
        <begin position="1"/>
        <end position="528"/>
    </location>
</feature>
<feature type="domain" description="ABC transporter 1" evidence="2">
    <location>
        <begin position="2"/>
        <end position="242"/>
    </location>
</feature>
<feature type="domain" description="ABC transporter 2" evidence="2">
    <location>
        <begin position="262"/>
        <end position="494"/>
    </location>
</feature>
<feature type="binding site" evidence="2">
    <location>
        <begin position="36"/>
        <end position="43"/>
    </location>
    <ligand>
        <name>ATP</name>
        <dbReference type="ChEBI" id="CHEBI:30616"/>
        <label>1</label>
    </ligand>
</feature>
<feature type="binding site" evidence="2">
    <location>
        <begin position="294"/>
        <end position="301"/>
    </location>
    <ligand>
        <name>ATP</name>
        <dbReference type="ChEBI" id="CHEBI:30616"/>
        <label>2</label>
    </ligand>
</feature>
<dbReference type="EC" id="7.-.-.-"/>
<dbReference type="EMBL" id="AE010299">
    <property type="protein sequence ID" value="AAM04833.1"/>
    <property type="molecule type" value="Genomic_DNA"/>
</dbReference>
<dbReference type="RefSeq" id="WP_011021434.1">
    <property type="nucleotide sequence ID" value="NC_003552.1"/>
</dbReference>
<dbReference type="SMR" id="Q8TQW9"/>
<dbReference type="STRING" id="188937.MA_1418"/>
<dbReference type="EnsemblBacteria" id="AAM04833">
    <property type="protein sequence ID" value="AAM04833"/>
    <property type="gene ID" value="MA_1418"/>
</dbReference>
<dbReference type="GeneID" id="1473306"/>
<dbReference type="KEGG" id="mac:MA_1418"/>
<dbReference type="HOGENOM" id="CLU_000604_86_7_2"/>
<dbReference type="InParanoid" id="Q8TQW9"/>
<dbReference type="OrthoDB" id="35850at2157"/>
<dbReference type="PhylomeDB" id="Q8TQW9"/>
<dbReference type="Proteomes" id="UP000002487">
    <property type="component" value="Chromosome"/>
</dbReference>
<dbReference type="GO" id="GO:0043190">
    <property type="term" value="C:ATP-binding cassette (ABC) transporter complex"/>
    <property type="evidence" value="ECO:0000318"/>
    <property type="project" value="GO_Central"/>
</dbReference>
<dbReference type="GO" id="GO:0005524">
    <property type="term" value="F:ATP binding"/>
    <property type="evidence" value="ECO:0000318"/>
    <property type="project" value="GO_Central"/>
</dbReference>
<dbReference type="GO" id="GO:0016887">
    <property type="term" value="F:ATP hydrolysis activity"/>
    <property type="evidence" value="ECO:0007669"/>
    <property type="project" value="InterPro"/>
</dbReference>
<dbReference type="GO" id="GO:0042626">
    <property type="term" value="F:ATPase-coupled transmembrane transporter activity"/>
    <property type="evidence" value="ECO:0000318"/>
    <property type="project" value="GO_Central"/>
</dbReference>
<dbReference type="CDD" id="cd03225">
    <property type="entry name" value="ABC_cobalt_CbiO_domain1"/>
    <property type="match status" value="2"/>
</dbReference>
<dbReference type="FunFam" id="3.40.50.300:FF:000224">
    <property type="entry name" value="Energy-coupling factor transporter ATP-binding protein EcfA"/>
    <property type="match status" value="2"/>
</dbReference>
<dbReference type="Gene3D" id="3.40.50.300">
    <property type="entry name" value="P-loop containing nucleotide triphosphate hydrolases"/>
    <property type="match status" value="2"/>
</dbReference>
<dbReference type="InterPro" id="IPR003593">
    <property type="entry name" value="AAA+_ATPase"/>
</dbReference>
<dbReference type="InterPro" id="IPR003439">
    <property type="entry name" value="ABC_transporter-like_ATP-bd"/>
</dbReference>
<dbReference type="InterPro" id="IPR017871">
    <property type="entry name" value="ABC_transporter-like_CS"/>
</dbReference>
<dbReference type="InterPro" id="IPR015856">
    <property type="entry name" value="ABC_transpr_CbiO/EcfA_su"/>
</dbReference>
<dbReference type="InterPro" id="IPR050095">
    <property type="entry name" value="ECF_ABC_transporter_ATP-bd"/>
</dbReference>
<dbReference type="InterPro" id="IPR027417">
    <property type="entry name" value="P-loop_NTPase"/>
</dbReference>
<dbReference type="NCBIfam" id="NF010167">
    <property type="entry name" value="PRK13648.1"/>
    <property type="match status" value="2"/>
</dbReference>
<dbReference type="PANTHER" id="PTHR43553:SF21">
    <property type="entry name" value="ABC TRANSPORTER ATP-BINDING PROTEIN MA_1418-RELATED"/>
    <property type="match status" value="1"/>
</dbReference>
<dbReference type="PANTHER" id="PTHR43553">
    <property type="entry name" value="HEAVY METAL TRANSPORTER"/>
    <property type="match status" value="1"/>
</dbReference>
<dbReference type="Pfam" id="PF00005">
    <property type="entry name" value="ABC_tran"/>
    <property type="match status" value="2"/>
</dbReference>
<dbReference type="SMART" id="SM00382">
    <property type="entry name" value="AAA"/>
    <property type="match status" value="2"/>
</dbReference>
<dbReference type="SUPFAM" id="SSF52540">
    <property type="entry name" value="P-loop containing nucleoside triphosphate hydrolases"/>
    <property type="match status" value="2"/>
</dbReference>
<dbReference type="PROSITE" id="PS00211">
    <property type="entry name" value="ABC_TRANSPORTER_1"/>
    <property type="match status" value="1"/>
</dbReference>
<dbReference type="PROSITE" id="PS50893">
    <property type="entry name" value="ABC_TRANSPORTER_2"/>
    <property type="match status" value="2"/>
</dbReference>
<protein>
    <recommendedName>
        <fullName>Putative ABC transporter ATP-binding protein MA_1418</fullName>
        <ecNumber>7.-.-.-</ecNumber>
    </recommendedName>
</protein>
<proteinExistence type="inferred from homology"/>
<reference key="1">
    <citation type="journal article" date="2002" name="Genome Res.">
        <title>The genome of Methanosarcina acetivorans reveals extensive metabolic and physiological diversity.</title>
        <authorList>
            <person name="Galagan J.E."/>
            <person name="Nusbaum C."/>
            <person name="Roy A."/>
            <person name="Endrizzi M.G."/>
            <person name="Macdonald P."/>
            <person name="FitzHugh W."/>
            <person name="Calvo S."/>
            <person name="Engels R."/>
            <person name="Smirnov S."/>
            <person name="Atnoor D."/>
            <person name="Brown A."/>
            <person name="Allen N."/>
            <person name="Naylor J."/>
            <person name="Stange-Thomann N."/>
            <person name="DeArellano K."/>
            <person name="Johnson R."/>
            <person name="Linton L."/>
            <person name="McEwan P."/>
            <person name="McKernan K."/>
            <person name="Talamas J."/>
            <person name="Tirrell A."/>
            <person name="Ye W."/>
            <person name="Zimmer A."/>
            <person name="Barber R.D."/>
            <person name="Cann I."/>
            <person name="Graham D.E."/>
            <person name="Grahame D.A."/>
            <person name="Guss A.M."/>
            <person name="Hedderich R."/>
            <person name="Ingram-Smith C."/>
            <person name="Kuettner H.C."/>
            <person name="Krzycki J.A."/>
            <person name="Leigh J.A."/>
            <person name="Li W."/>
            <person name="Liu J."/>
            <person name="Mukhopadhyay B."/>
            <person name="Reeve J.N."/>
            <person name="Smith K."/>
            <person name="Springer T.A."/>
            <person name="Umayam L.A."/>
            <person name="White O."/>
            <person name="White R.H."/>
            <person name="de Macario E.C."/>
            <person name="Ferry J.G."/>
            <person name="Jarrell K.F."/>
            <person name="Jing H."/>
            <person name="Macario A.J.L."/>
            <person name="Paulsen I.T."/>
            <person name="Pritchett M."/>
            <person name="Sowers K.R."/>
            <person name="Swanson R.V."/>
            <person name="Zinder S.H."/>
            <person name="Lander E."/>
            <person name="Metcalf W.W."/>
            <person name="Birren B."/>
        </authorList>
    </citation>
    <scope>NUCLEOTIDE SEQUENCE [LARGE SCALE GENOMIC DNA]</scope>
    <source>
        <strain>ATCC 35395 / DSM 2834 / JCM 12185 / C2A</strain>
    </source>
</reference>
<accession>Q8TQW9</accession>
<comment type="function">
    <text evidence="1">Probably part of an ABC transporter complex. Responsible for energy coupling to the transport system (By similarity).</text>
</comment>
<comment type="subcellular location">
    <subcellularLocation>
        <location evidence="1">Cell membrane</location>
        <topology evidence="1">Peripheral membrane protein</topology>
    </subcellularLocation>
</comment>
<comment type="similarity">
    <text evidence="3">Belongs to the ABC transporter superfamily.</text>
</comment>
<evidence type="ECO:0000250" key="1"/>
<evidence type="ECO:0000255" key="2">
    <source>
        <dbReference type="PROSITE-ProRule" id="PRU00434"/>
    </source>
</evidence>
<evidence type="ECO:0000305" key="3"/>
<name>Y1418_METAC</name>
<organism>
    <name type="scientific">Methanosarcina acetivorans (strain ATCC 35395 / DSM 2834 / JCM 12185 / C2A)</name>
    <dbReference type="NCBI Taxonomy" id="188937"/>
    <lineage>
        <taxon>Archaea</taxon>
        <taxon>Methanobacteriati</taxon>
        <taxon>Methanobacteriota</taxon>
        <taxon>Stenosarchaea group</taxon>
        <taxon>Methanomicrobia</taxon>
        <taxon>Methanosarcinales</taxon>
        <taxon>Methanosarcinaceae</taxon>
        <taxon>Methanosarcina</taxon>
    </lineage>
</organism>
<keyword id="KW-0067">ATP-binding</keyword>
<keyword id="KW-1003">Cell membrane</keyword>
<keyword id="KW-0472">Membrane</keyword>
<keyword id="KW-0547">Nucleotide-binding</keyword>
<keyword id="KW-1185">Reference proteome</keyword>
<keyword id="KW-0677">Repeat</keyword>
<keyword id="KW-1278">Translocase</keyword>
<keyword id="KW-0813">Transport</keyword>